<proteinExistence type="evidence at protein level"/>
<feature type="signal peptide" evidence="3">
    <location>
        <begin position="1"/>
        <end position="19"/>
    </location>
</feature>
<feature type="chain" id="PRO_0000004027" description="Calsyntenin-3">
    <location>
        <begin position="20"/>
        <end position="956"/>
    </location>
</feature>
<feature type="topological domain" description="Extracellular" evidence="3">
    <location>
        <begin position="20"/>
        <end position="847"/>
    </location>
</feature>
<feature type="transmembrane region" description="Helical" evidence="3">
    <location>
        <begin position="848"/>
        <end position="868"/>
    </location>
</feature>
<feature type="topological domain" description="Cytoplasmic" evidence="3">
    <location>
        <begin position="869"/>
        <end position="956"/>
    </location>
</feature>
<feature type="domain" description="Cadherin 1" evidence="4">
    <location>
        <begin position="29"/>
        <end position="145"/>
    </location>
</feature>
<feature type="domain" description="Cadherin 2" evidence="4">
    <location>
        <begin position="146"/>
        <end position="246"/>
    </location>
</feature>
<feature type="region of interest" description="Disordered" evidence="5">
    <location>
        <begin position="916"/>
        <end position="956"/>
    </location>
</feature>
<feature type="compositionally biased region" description="Acidic residues" evidence="5">
    <location>
        <begin position="927"/>
        <end position="937"/>
    </location>
</feature>
<feature type="compositionally biased region" description="Basic and acidic residues" evidence="5">
    <location>
        <begin position="943"/>
        <end position="956"/>
    </location>
</feature>
<feature type="glycosylation site" description="N-linked (GlcNAc...) asparagine" evidence="3">
    <location>
        <position position="299"/>
    </location>
</feature>
<feature type="glycosylation site" description="N-linked (GlcNAc...) asparagine" evidence="3">
    <location>
        <position position="327"/>
    </location>
</feature>
<feature type="glycosylation site" description="N-linked (GlcNAc...) asparagine" evidence="3">
    <location>
        <position position="347"/>
    </location>
</feature>
<feature type="glycosylation site" description="N-linked (GlcNAc...) asparagine" evidence="3">
    <location>
        <position position="507"/>
    </location>
</feature>
<feature type="glycosylation site" description="N-linked (GlcNAc...) asparagine" evidence="3">
    <location>
        <position position="740"/>
    </location>
</feature>
<feature type="splice variant" id="VSP_061881" description="In isoform CLSTN3beta.">
    <original>MTLLLVSLLLASLLQISSGNKANKHKPWIEAEYQGIVMENDNTVLLNPPLFALDKDAPLRYAGEICGFRLHGSGVPFEAVILDKATGEGLIRAKEPVDCEAQKEHTFTIQAYDCGEGPDGTNTKKSHKATVHVRVNDVNEFAPVFVERLYRAAVTEGKLYDRILRVEAIDGDCSPQYSQICYYEILTPNTPFLIDNDGNIENTEKLQYSGEKLYKFTVTAYDCGKKRAADDAEVEIQVKPTCKPSWQGWNKRIEYAPGAGSLALFPGIRLETCDEPLWNIQATIELQTSHVAKGCDRDNYSERALRKLCGAATGEVDLLPMPGPNANWTAGLSVHYSQDSSLIYWFNGTQAVQVPLGGPAGLGSGPQDGFSDHFTLSFWMKHSVTPSKGKKEEETIVCNTVQNEDGYSHYSLTVHGCRIAFLYWPLLESARPVKFLWKLEQVCDDEWHHYALNLEFPTVTLYTDGISFDPALIHDNGLIHPPRREPALMIGACWTEEKNKEKKGGENSTDTASGDPLLIHHYFHGYLAGFSVRSGRLESREVIECLYACREGLDYRDFESLGKGMKVHVNPSQSLLTLEGDDVETFNHALQHVAYMNTLRFATPGVRPLRLTTAVKCFSEESCVSIPEVEGYVVVLQPDAPQILLSGTAHFARPAVDFEGPEGVPLFPDLQITCSISHQVEAKADESWQGTVTDTRMSDEIVHNLDGCEISLVGDDLDPERESLLLDMASLQQRGLELTNTSAYLTIAGVETITVYEEILRQARYQLRHGAALYARKFRLSCSEMNGRYSSNEFIVEVNVLHSMNRVAHPSHVLSSQQFLHRGHQPPPEMAGHSLASSHRNSM</original>
    <variation>MWQVAIQLPRRVLGLGLYLWGLFLHLLFLGFGAPLLCFLVLLRVLSLAAQNGAQVVFMAARSVALRVQVCSVYVFLQGGAWFAQLVGSWVTLLIRLFGGMLETLTHIPLILLCEQAARWLVQAVVWVTRGLARVWGMATFVQLCAHSFFIGMCLCLHICFSTISSKVHVRVHMPFCLSLPVRVHVPLNLGIRMRLQGGRPRSAAVEVGRPQGETPQEQQPCRTRNLRPTRRREVSRNRSEPRRV</variation>
    <location>
        <begin position="1"/>
        <end position="843"/>
    </location>
</feature>
<feature type="mutagenesis site" description="Increased KLC1-binding." evidence="7">
    <original>F</original>
    <variation>D</variation>
    <location>
        <position position="896"/>
    </location>
</feature>
<feature type="topological domain" description="Cytoplasmic" evidence="23">
    <location sequence="Q99JH7-2">
        <begin position="1"/>
        <end position="21"/>
    </location>
</feature>
<feature type="intramembrane region" description="Helical" evidence="23">
    <location sequence="Q99JH7-2">
        <begin position="22"/>
        <end position="42"/>
    </location>
</feature>
<feature type="topological domain" description="Cytoplasmic" evidence="23">
    <location sequence="Q99JH7-2">
        <begin position="43"/>
        <end position="73"/>
    </location>
</feature>
<feature type="intramembrane region" description="Helical" evidence="23">
    <location sequence="Q99JH7-2">
        <begin position="74"/>
        <end position="94"/>
    </location>
</feature>
<feature type="topological domain" description="Cytoplasmic" evidence="23">
    <location sequence="Q99JH7-2">
        <begin position="95"/>
        <end position="139"/>
    </location>
</feature>
<feature type="intramembrane region" description="Helical" evidence="23">
    <location sequence="Q99JH7-2">
        <begin position="140"/>
        <end position="160"/>
    </location>
</feature>
<feature type="topological domain" description="Cytoplasmic" evidence="23">
    <location sequence="Q99JH7-2">
        <begin position="161"/>
        <end position="248"/>
    </location>
</feature>
<feature type="transmembrane region" description="Helical" evidence="3">
    <location sequence="Q99JH7-2">
        <begin position="249"/>
        <end position="269"/>
    </location>
</feature>
<feature type="topological domain" description="Lumenal" evidence="23">
    <location sequence="Q99JH7-2">
        <begin position="270"/>
        <end position="357"/>
    </location>
</feature>
<comment type="function">
    <text evidence="1 8 9 12 14 16">Postsynaptic adhesion molecule that binds to presynaptic neurexins to mediate both excitatory and inhibitory synapse formation (PubMed:24094106, PubMed:24613359, PubMed:32434929, PubMed:35420982). Promotes synapse development by acting as a cell adhesion molecule at the postsynaptic membrane, which associates with both neurexin-alpha and neurexin-beta proteins at the presynaptic membrane (PubMed:24094106, PubMed:24613359, PubMed:32434929). Regulates the balance between excitatory and inhibitory synapses by inhibiting formation of excitatory parallel-fiber synapses and promoting formation of inhibitory synapses in the same neuron (PubMed:35420982). May also be involved in ascorbate (vitamin C) uptake via its interaction with SLC23A2/SVCT2 (PubMed:33672967). Complex formation with APBA2 and APP, stabilizes APP metabolism and enhances APBA2-mediated suppression of beta-APP40 secretion, due to the retardation of intracellular APP maturation (By similarity).</text>
</comment>
<comment type="function">
    <molecule>Isoform CLSTN3beta</molecule>
    <text evidence="10 17">Adipose-specific isoform that plays a key role in adaptive thermogenesis (PubMed:31043739, PubMed:36477540). Facilitates the efficient use of stored triglyceride by promoting multilocular morphology of thermogenic adipocytes: acts by inhibiting the activity of CIDEA and CIDEC on lipid droplets, thereby preventing lipid droplet fusion and facilitating lipid utilization (PubMed:36477540). May also participate in adaptive thermogenesis by promoting sympathetic innervation of thermogenic adipose tissue: acts by driving secretion of neurotrophic factor S100B from brown adipocytes, stimulating neurite outgrowth from sympathetic neurons (PubMed:31043739).</text>
</comment>
<comment type="subunit">
    <text evidence="1 7 8 9 12">Interacts (via cadherin domains) with both alpha and beta isoforms of neurexins (NRXN1, NRXN2 and NRXN3) (PubMed:24094106, PubMed:24613359, PubMed:32434929). Directly interacts with APBA2 (By similarity). Forms a tripartite complex with APBA2 and APP (By similarity). Interacts with low affinity with KLC1 (PubMed:16760430). Interacts with SLC23A2/SVCT2 (By similarity).</text>
</comment>
<comment type="subunit">
    <molecule>Isoform CLSTN3beta</molecule>
    <text evidence="17">Interacts with CIDEA; inhibiting the lipid transferase activity of CIDEA (PubMed:36477540). Interacts with CIDEC; inhibiting the lipid transferase activity of CIDEC (PubMed:36477540).</text>
</comment>
<comment type="subcellular location">
    <subcellularLocation>
        <location evidence="6 9">Postsynaptic cell membrane</location>
        <topology evidence="3">Single-pass type I membrane protein</topology>
    </subcellularLocation>
    <subcellularLocation>
        <location evidence="6">Endoplasmic reticulum membrane</location>
        <topology evidence="3">Single-pass type I membrane protein</topology>
    </subcellularLocation>
    <subcellularLocation>
        <location evidence="6">Golgi apparatus membrane</location>
        <topology evidence="3">Single-pass type I membrane protein</topology>
    </subcellularLocation>
    <subcellularLocation>
        <location evidence="6">Cell projection</location>
        <location evidence="6">Dendrite</location>
    </subcellularLocation>
    <text evidence="6">Most prominent in the postsynaptic specializations of asymmetric (type I) synapses with both axodendritic and axospinous localization.</text>
</comment>
<comment type="subcellular location">
    <molecule>Isoform CLSTN3beta</molecule>
    <subcellularLocation>
        <location evidence="17">Lipid droplet</location>
    </subcellularLocation>
    <subcellularLocation>
        <location evidence="10 17">Endoplasmic reticulum membrane</location>
        <topology evidence="3">Single-pass membrane protein</topology>
    </subcellularLocation>
    <text evidence="17">Localizes to endoplasmic reticulum-lipid droplet contact sites through the partitioning of its N-terminal hydrophobic hairpins onto lipid droplets while its C-terminal transmembrane domain remains anchored in the endoplasmic reticulum.</text>
</comment>
<comment type="alternative products">
    <event type="alternative splicing"/>
    <isoform>
        <id>Q99JH7-1</id>
        <name>1</name>
        <sequence type="displayed"/>
    </isoform>
    <isoform>
        <id>Q99JH7-2</id>
        <name evidence="21">CLSTN3beta</name>
        <name evidence="21">Calsyntenin-3beta</name>
        <sequence type="described" ref="VSP_061881"/>
    </isoform>
</comment>
<comment type="tissue specificity">
    <text evidence="6 8">Restricted to the brain (at protein level) (PubMed:12498782, PubMed:24094106). In the cerebral cortex, found in the somas and neuropil of all layers (PubMed:12498782). Expressed at highest levels in neurons of cortical layer 5 and, at lower levels, in neurons of the upper layers (PubMed:12498782). Highly expressed in Purkinje cells (PubMed:12498782). Also found in a few scattered interneurons throughout the granule cell layer and occasionally in neurons in the molecular layer (at protein level) (PubMed:12498782). In all layers, high levels in a subpopulation of presumptive GABAergic neurons (based on morphology) (PubMed:12498782).</text>
</comment>
<comment type="tissue specificity">
    <molecule>Isoform CLSTN3beta</molecule>
    <text evidence="10 13 17">Expression is restricted to adipose tissue, with high expression in thermogenic adipocytes (brown adipose tissue).</text>
</comment>
<comment type="induction">
    <molecule>Isoform CLSTN3beta</molecule>
    <text evidence="10 13 17">Expression is induced by cold and PPAR-gamma (PPARG).</text>
</comment>
<comment type="domain">
    <text evidence="2">The cytoplasmic domain binds synaptic Ca(2+).</text>
</comment>
<comment type="PTM">
    <text evidence="1">Proteolytically processed under normal cellular conditions. A primary zeta-cleavage generates a large extracellular (soluble) N-terminal domain (sAlc) and a short C-terminal transmembrane fragment (CTF1). A secondary cleavage catalyzed by gamma-secretase within the transmembrane domain releases the beta-Alc-beta chain in the extracellular milieu and produces an intracellular fragment (AlcICD). This processing is strongly suppressed in the tripartite complex formed with APBA2 and APP, which seems to prevent the association with gamma-secretase.</text>
</comment>
<comment type="PTM">
    <molecule>Isoform CLSTN3beta</molecule>
    <text evidence="17">Ubiquitinated: endoplasmic reticulum-localized protein is ubiquitinated and degraded by the endoplasmic reticulum-associated degradation (ERAD) pathway.</text>
</comment>
<comment type="disruption phenotype">
    <text evidence="8 11 12 15 16">Mice are defective in both excitatory and inhibitory synapse development (PubMed:24094106). Mice also show reduced body mass and increased energy expenditure (PubMed:32382066). Mice also display reduced marrow volume and cortical bone mass without alteration of trabecular bone microarchitecture (PubMed:32382066). Conditional deletion in neurons leads to a significant reduction in number of excitatory synaptic inputs (PubMed:32434929). Conditional deletion in the cerebellum causes major impairments in motor learning due to a large decrease in inhibitory synapse, associated with a robust increase in excitatory parallel-fiber synapses in Purkinje cells (PubMed:35420982). As a result, inhibitory synaptic transmission is suppressed, whereas parallel-fiber synaptic transmission is enhanced in Purkinje cells (PubMed:35420982). No changes in the dendritic architecture of Purkinje cells or in climbing-fiber synapses is observed (PubMed:35420982). Mice lacking Clstn1, Clstn2 and Clstn3 display behavior disorders, characterized by hyperactivity in normal environment, hypersensitivity to stress, and show tendency to freeze in novel environments (PubMed:35279170).</text>
</comment>
<comment type="disruption phenotype">
    <molecule>Isoform CLSTN3beta</molecule>
    <text evidence="10 17">Mice are defective in energy expenditure and adaptive thermogenesis: mutant mice are hypothermic at a faster rate than controls during acute cold challenge (PubMed:31043739, PubMed:36477540). Mice show larger and paler brown adipose tissue and display abnormal lipid droplet forms (PubMed:36477540).</text>
</comment>
<comment type="similarity">
    <text evidence="22">Belongs to the calsyntenin family.</text>
</comment>
<organism>
    <name type="scientific">Mus musculus</name>
    <name type="common">Mouse</name>
    <dbReference type="NCBI Taxonomy" id="10090"/>
    <lineage>
        <taxon>Eukaryota</taxon>
        <taxon>Metazoa</taxon>
        <taxon>Chordata</taxon>
        <taxon>Craniata</taxon>
        <taxon>Vertebrata</taxon>
        <taxon>Euteleostomi</taxon>
        <taxon>Mammalia</taxon>
        <taxon>Eutheria</taxon>
        <taxon>Euarchontoglires</taxon>
        <taxon>Glires</taxon>
        <taxon>Rodentia</taxon>
        <taxon>Myomorpha</taxon>
        <taxon>Muroidea</taxon>
        <taxon>Muridae</taxon>
        <taxon>Murinae</taxon>
        <taxon>Mus</taxon>
        <taxon>Mus</taxon>
    </lineage>
</organism>
<evidence type="ECO:0000250" key="1">
    <source>
        <dbReference type="UniProtKB" id="Q9BQT9"/>
    </source>
</evidence>
<evidence type="ECO:0000250" key="2">
    <source>
        <dbReference type="UniProtKB" id="Q9EPL2"/>
    </source>
</evidence>
<evidence type="ECO:0000255" key="3"/>
<evidence type="ECO:0000255" key="4">
    <source>
        <dbReference type="PROSITE-ProRule" id="PRU00043"/>
    </source>
</evidence>
<evidence type="ECO:0000256" key="5">
    <source>
        <dbReference type="SAM" id="MobiDB-lite"/>
    </source>
</evidence>
<evidence type="ECO:0000269" key="6">
    <source>
    </source>
</evidence>
<evidence type="ECO:0000269" key="7">
    <source>
    </source>
</evidence>
<evidence type="ECO:0000269" key="8">
    <source>
    </source>
</evidence>
<evidence type="ECO:0000269" key="9">
    <source>
    </source>
</evidence>
<evidence type="ECO:0000269" key="10">
    <source>
    </source>
</evidence>
<evidence type="ECO:0000269" key="11">
    <source>
    </source>
</evidence>
<evidence type="ECO:0000269" key="12">
    <source>
    </source>
</evidence>
<evidence type="ECO:0000269" key="13">
    <source>
    </source>
</evidence>
<evidence type="ECO:0000269" key="14">
    <source>
    </source>
</evidence>
<evidence type="ECO:0000269" key="15">
    <source>
    </source>
</evidence>
<evidence type="ECO:0000269" key="16">
    <source>
    </source>
</evidence>
<evidence type="ECO:0000269" key="17">
    <source>
    </source>
</evidence>
<evidence type="ECO:0000303" key="18">
    <source>
    </source>
</evidence>
<evidence type="ECO:0000303" key="19">
    <source>
    </source>
</evidence>
<evidence type="ECO:0000303" key="20">
    <source>
    </source>
</evidence>
<evidence type="ECO:0000303" key="21">
    <source>
    </source>
</evidence>
<evidence type="ECO:0000305" key="22"/>
<evidence type="ECO:0000305" key="23">
    <source>
    </source>
</evidence>
<evidence type="ECO:0000312" key="24">
    <source>
        <dbReference type="MGI" id="MGI:2178323"/>
    </source>
</evidence>
<dbReference type="EMBL" id="AJ278486">
    <property type="protein sequence ID" value="CAC33088.1"/>
    <property type="molecule type" value="mRNA"/>
</dbReference>
<dbReference type="EMBL" id="AK032336">
    <property type="protein sequence ID" value="BAC27821.1"/>
    <property type="molecule type" value="mRNA"/>
</dbReference>
<dbReference type="EMBL" id="MK758090">
    <property type="protein sequence ID" value="QCO31665.1"/>
    <property type="molecule type" value="mRNA"/>
</dbReference>
<dbReference type="EMBL" id="BC055054">
    <property type="protein sequence ID" value="AAH55054.1"/>
    <property type="molecule type" value="mRNA"/>
</dbReference>
<dbReference type="CCDS" id="CCDS20519.1">
    <molecule id="Q99JH7-1"/>
</dbReference>
<dbReference type="RefSeq" id="NP_705728.1">
    <molecule id="Q99JH7-1"/>
    <property type="nucleotide sequence ID" value="NM_153508.4"/>
</dbReference>
<dbReference type="SMR" id="Q99JH7"/>
<dbReference type="BioGRID" id="231248">
    <property type="interactions" value="1"/>
</dbReference>
<dbReference type="FunCoup" id="Q99JH7">
    <property type="interactions" value="404"/>
</dbReference>
<dbReference type="IntAct" id="Q99JH7">
    <property type="interactions" value="1"/>
</dbReference>
<dbReference type="STRING" id="10090.ENSMUSP00000008297"/>
<dbReference type="GlyConnect" id="2177">
    <property type="glycosylation" value="3 N-Linked glycans (1 site)"/>
</dbReference>
<dbReference type="GlyCosmos" id="Q99JH7">
    <property type="glycosylation" value="5 sites, 3 glycans"/>
</dbReference>
<dbReference type="GlyGen" id="Q99JH7">
    <property type="glycosylation" value="6 sites, 3 N-linked glycans (1 site), 1 O-linked glycan (1 site)"/>
</dbReference>
<dbReference type="iPTMnet" id="Q99JH7"/>
<dbReference type="PhosphoSitePlus" id="Q99JH7"/>
<dbReference type="PaxDb" id="10090-ENSMUSP00000008297"/>
<dbReference type="ProteomicsDB" id="277911"/>
<dbReference type="Antibodypedia" id="42025">
    <property type="antibodies" value="35 antibodies from 15 providers"/>
</dbReference>
<dbReference type="DNASU" id="232370"/>
<dbReference type="Ensembl" id="ENSMUST00000008297.5">
    <molecule id="Q99JH7-1"/>
    <property type="protein sequence ID" value="ENSMUSP00000008297.5"/>
    <property type="gene ID" value="ENSMUSG00000008153.13"/>
</dbReference>
<dbReference type="Ensembl" id="ENSMUST00000238807.2">
    <molecule id="Q99JH7-2"/>
    <property type="protein sequence ID" value="ENSMUSP00000158920.2"/>
    <property type="gene ID" value="ENSMUSG00000008153.13"/>
</dbReference>
<dbReference type="GeneID" id="232370"/>
<dbReference type="KEGG" id="mmu:232370"/>
<dbReference type="UCSC" id="uc009dqw.2">
    <molecule id="Q99JH7-1"/>
    <property type="organism name" value="mouse"/>
</dbReference>
<dbReference type="AGR" id="MGI:2178323"/>
<dbReference type="CTD" id="9746"/>
<dbReference type="MGI" id="MGI:2178323">
    <property type="gene designation" value="Clstn3"/>
</dbReference>
<dbReference type="VEuPathDB" id="HostDB:ENSMUSG00000008153"/>
<dbReference type="eggNOG" id="KOG1834">
    <property type="taxonomic scope" value="Eukaryota"/>
</dbReference>
<dbReference type="GeneTree" id="ENSGT00950000183086"/>
<dbReference type="InParanoid" id="Q99JH7"/>
<dbReference type="OMA" id="YTVQCAM"/>
<dbReference type="OrthoDB" id="10012272at2759"/>
<dbReference type="PhylomeDB" id="Q99JH7"/>
<dbReference type="TreeFam" id="TF315946"/>
<dbReference type="BioGRID-ORCS" id="232370">
    <property type="hits" value="1 hit in 78 CRISPR screens"/>
</dbReference>
<dbReference type="ChiTaRS" id="Clstn3">
    <property type="organism name" value="mouse"/>
</dbReference>
<dbReference type="PRO" id="PR:Q99JH7"/>
<dbReference type="Proteomes" id="UP000000589">
    <property type="component" value="Chromosome 6"/>
</dbReference>
<dbReference type="RNAct" id="Q99JH7">
    <property type="molecule type" value="protein"/>
</dbReference>
<dbReference type="Bgee" id="ENSMUSG00000008153">
    <property type="expression patterns" value="Expressed in primary visual cortex and 122 other cell types or tissues"/>
</dbReference>
<dbReference type="ExpressionAtlas" id="Q99JH7">
    <property type="expression patterns" value="baseline and differential"/>
</dbReference>
<dbReference type="GO" id="GO:0009986">
    <property type="term" value="C:cell surface"/>
    <property type="evidence" value="ECO:0000314"/>
    <property type="project" value="MGI"/>
</dbReference>
<dbReference type="GO" id="GO:0030425">
    <property type="term" value="C:dendrite"/>
    <property type="evidence" value="ECO:0007669"/>
    <property type="project" value="UniProtKB-SubCell"/>
</dbReference>
<dbReference type="GO" id="GO:0005783">
    <property type="term" value="C:endoplasmic reticulum"/>
    <property type="evidence" value="ECO:0000314"/>
    <property type="project" value="UniProtKB"/>
</dbReference>
<dbReference type="GO" id="GO:0005789">
    <property type="term" value="C:endoplasmic reticulum membrane"/>
    <property type="evidence" value="ECO:0000314"/>
    <property type="project" value="UniProtKB"/>
</dbReference>
<dbReference type="GO" id="GO:0098982">
    <property type="term" value="C:GABA-ergic synapse"/>
    <property type="evidence" value="ECO:0000314"/>
    <property type="project" value="SynGO"/>
</dbReference>
<dbReference type="GO" id="GO:0098978">
    <property type="term" value="C:glutamatergic synapse"/>
    <property type="evidence" value="ECO:0000314"/>
    <property type="project" value="SynGO"/>
</dbReference>
<dbReference type="GO" id="GO:0000139">
    <property type="term" value="C:Golgi membrane"/>
    <property type="evidence" value="ECO:0007669"/>
    <property type="project" value="UniProtKB-SubCell"/>
</dbReference>
<dbReference type="GO" id="GO:0005811">
    <property type="term" value="C:lipid droplet"/>
    <property type="evidence" value="ECO:0000314"/>
    <property type="project" value="UniProtKB"/>
</dbReference>
<dbReference type="GO" id="GO:0044232">
    <property type="term" value="C:organelle membrane contact site"/>
    <property type="evidence" value="ECO:0000314"/>
    <property type="project" value="UniProtKB"/>
</dbReference>
<dbReference type="GO" id="GO:0014069">
    <property type="term" value="C:postsynaptic density"/>
    <property type="evidence" value="ECO:0000314"/>
    <property type="project" value="MGI"/>
</dbReference>
<dbReference type="GO" id="GO:0098839">
    <property type="term" value="C:postsynaptic density membrane"/>
    <property type="evidence" value="ECO:0000314"/>
    <property type="project" value="SynGO"/>
</dbReference>
<dbReference type="GO" id="GO:0045211">
    <property type="term" value="C:postsynaptic membrane"/>
    <property type="evidence" value="ECO:0000314"/>
    <property type="project" value="MGI"/>
</dbReference>
<dbReference type="GO" id="GO:0032991">
    <property type="term" value="C:protein-containing complex"/>
    <property type="evidence" value="ECO:0000353"/>
    <property type="project" value="MGI"/>
</dbReference>
<dbReference type="GO" id="GO:0005509">
    <property type="term" value="F:calcium ion binding"/>
    <property type="evidence" value="ECO:0007669"/>
    <property type="project" value="InterPro"/>
</dbReference>
<dbReference type="GO" id="GO:0098632">
    <property type="term" value="F:cell-cell adhesion mediator activity"/>
    <property type="evidence" value="ECO:0000314"/>
    <property type="project" value="UniProtKB"/>
</dbReference>
<dbReference type="GO" id="GO:0004857">
    <property type="term" value="F:enzyme inhibitor activity"/>
    <property type="evidence" value="ECO:0000314"/>
    <property type="project" value="UniProtKB"/>
</dbReference>
<dbReference type="GO" id="GO:0042043">
    <property type="term" value="F:neurexin family protein binding"/>
    <property type="evidence" value="ECO:0000314"/>
    <property type="project" value="UniProtKB"/>
</dbReference>
<dbReference type="GO" id="GO:1990845">
    <property type="term" value="P:adaptive thermogenesis"/>
    <property type="evidence" value="ECO:0000314"/>
    <property type="project" value="UniProtKB"/>
</dbReference>
<dbReference type="GO" id="GO:0106106">
    <property type="term" value="P:cold-induced thermogenesis"/>
    <property type="evidence" value="ECO:0000314"/>
    <property type="project" value="UniProtKB"/>
</dbReference>
<dbReference type="GO" id="GO:1904861">
    <property type="term" value="P:excitatory synapse assembly"/>
    <property type="evidence" value="ECO:0000315"/>
    <property type="project" value="UniProtKB"/>
</dbReference>
<dbReference type="GO" id="GO:0007156">
    <property type="term" value="P:homophilic cell adhesion via plasma membrane adhesion molecules"/>
    <property type="evidence" value="ECO:0007669"/>
    <property type="project" value="InterPro"/>
</dbReference>
<dbReference type="GO" id="GO:1904862">
    <property type="term" value="P:inhibitory synapse assembly"/>
    <property type="evidence" value="ECO:0000315"/>
    <property type="project" value="UniProtKB"/>
</dbReference>
<dbReference type="GO" id="GO:0019852">
    <property type="term" value="P:L-ascorbic acid metabolic process"/>
    <property type="evidence" value="ECO:0000314"/>
    <property type="project" value="UniProtKB"/>
</dbReference>
<dbReference type="GO" id="GO:0061743">
    <property type="term" value="P:motor learning"/>
    <property type="evidence" value="ECO:0000315"/>
    <property type="project" value="UniProtKB"/>
</dbReference>
<dbReference type="GO" id="GO:1904890">
    <property type="term" value="P:negative regulation of excitatory synapse assembly"/>
    <property type="evidence" value="ECO:0000315"/>
    <property type="project" value="UniProtKB"/>
</dbReference>
<dbReference type="GO" id="GO:0160078">
    <property type="term" value="P:negative regulation of lipid droplet fusion"/>
    <property type="evidence" value="ECO:0000314"/>
    <property type="project" value="UniProtKB"/>
</dbReference>
<dbReference type="GO" id="GO:0010888">
    <property type="term" value="P:negative regulation of lipid storage"/>
    <property type="evidence" value="ECO:0000314"/>
    <property type="project" value="UniProtKB"/>
</dbReference>
<dbReference type="GO" id="GO:1905704">
    <property type="term" value="P:positive regulation of inhibitory synapse assembly"/>
    <property type="evidence" value="ECO:0000315"/>
    <property type="project" value="UniProtKB"/>
</dbReference>
<dbReference type="GO" id="GO:0050996">
    <property type="term" value="P:positive regulation of lipid catabolic process"/>
    <property type="evidence" value="ECO:0000314"/>
    <property type="project" value="UniProtKB"/>
</dbReference>
<dbReference type="GO" id="GO:1902474">
    <property type="term" value="P:positive regulation of protein localization to synapse"/>
    <property type="evidence" value="ECO:0000314"/>
    <property type="project" value="MGI"/>
</dbReference>
<dbReference type="GO" id="GO:0051965">
    <property type="term" value="P:positive regulation of synapse assembly"/>
    <property type="evidence" value="ECO:0000314"/>
    <property type="project" value="MGI"/>
</dbReference>
<dbReference type="GO" id="GO:0050806">
    <property type="term" value="P:positive regulation of synaptic transmission"/>
    <property type="evidence" value="ECO:0000316"/>
    <property type="project" value="MGI"/>
</dbReference>
<dbReference type="GO" id="GO:0009306">
    <property type="term" value="P:protein secretion"/>
    <property type="evidence" value="ECO:0000314"/>
    <property type="project" value="UniProtKB"/>
</dbReference>
<dbReference type="GO" id="GO:0001558">
    <property type="term" value="P:regulation of cell growth"/>
    <property type="evidence" value="ECO:0000316"/>
    <property type="project" value="MGI"/>
</dbReference>
<dbReference type="GO" id="GO:1904889">
    <property type="term" value="P:regulation of excitatory synapse assembly"/>
    <property type="evidence" value="ECO:0000314"/>
    <property type="project" value="UniProtKB"/>
</dbReference>
<dbReference type="GO" id="GO:1905606">
    <property type="term" value="P:regulation of presynapse assembly"/>
    <property type="evidence" value="ECO:0000314"/>
    <property type="project" value="SynGO"/>
</dbReference>
<dbReference type="GO" id="GO:0097490">
    <property type="term" value="P:sympathetic neuron projection extension"/>
    <property type="evidence" value="ECO:0000314"/>
    <property type="project" value="UniProtKB"/>
</dbReference>
<dbReference type="GO" id="GO:0007416">
    <property type="term" value="P:synapse assembly"/>
    <property type="evidence" value="ECO:0000314"/>
    <property type="project" value="MGI"/>
</dbReference>
<dbReference type="GO" id="GO:0051932">
    <property type="term" value="P:synaptic transmission, GABAergic"/>
    <property type="evidence" value="ECO:0000315"/>
    <property type="project" value="MGI"/>
</dbReference>
<dbReference type="GO" id="GO:0035249">
    <property type="term" value="P:synaptic transmission, glutamatergic"/>
    <property type="evidence" value="ECO:0000315"/>
    <property type="project" value="MGI"/>
</dbReference>
<dbReference type="CDD" id="cd11304">
    <property type="entry name" value="Cadherin_repeat"/>
    <property type="match status" value="2"/>
</dbReference>
<dbReference type="FunFam" id="2.60.40.60:FF:000025">
    <property type="entry name" value="Calsyntenin 1"/>
    <property type="match status" value="1"/>
</dbReference>
<dbReference type="FunFam" id="2.60.120.200:FF:000069">
    <property type="entry name" value="Calsyntenin 3"/>
    <property type="match status" value="1"/>
</dbReference>
<dbReference type="FunFam" id="2.60.40.60:FF:000062">
    <property type="entry name" value="Calsyntenin 3"/>
    <property type="match status" value="1"/>
</dbReference>
<dbReference type="Gene3D" id="2.60.120.200">
    <property type="match status" value="1"/>
</dbReference>
<dbReference type="Gene3D" id="2.60.40.60">
    <property type="entry name" value="Cadherins"/>
    <property type="match status" value="2"/>
</dbReference>
<dbReference type="InterPro" id="IPR002126">
    <property type="entry name" value="Cadherin-like_dom"/>
</dbReference>
<dbReference type="InterPro" id="IPR015919">
    <property type="entry name" value="Cadherin-like_sf"/>
</dbReference>
<dbReference type="InterPro" id="IPR045588">
    <property type="entry name" value="CLSTN_C"/>
</dbReference>
<dbReference type="InterPro" id="IPR013320">
    <property type="entry name" value="ConA-like_dom_sf"/>
</dbReference>
<dbReference type="PANTHER" id="PTHR14139">
    <property type="entry name" value="CALSYNTENIN"/>
    <property type="match status" value="1"/>
</dbReference>
<dbReference type="PANTHER" id="PTHR14139:SF5">
    <property type="entry name" value="CALSYNTENIN-3"/>
    <property type="match status" value="1"/>
</dbReference>
<dbReference type="Pfam" id="PF19699">
    <property type="entry name" value="CLSTN_C"/>
    <property type="match status" value="1"/>
</dbReference>
<dbReference type="PRINTS" id="PR00205">
    <property type="entry name" value="CADHERIN"/>
</dbReference>
<dbReference type="SMART" id="SM00112">
    <property type="entry name" value="CA"/>
    <property type="match status" value="2"/>
</dbReference>
<dbReference type="SUPFAM" id="SSF49313">
    <property type="entry name" value="Cadherin-like"/>
    <property type="match status" value="2"/>
</dbReference>
<dbReference type="SUPFAM" id="SSF49899">
    <property type="entry name" value="Concanavalin A-like lectins/glucanases"/>
    <property type="match status" value="1"/>
</dbReference>
<dbReference type="PROSITE" id="PS50268">
    <property type="entry name" value="CADHERIN_2"/>
    <property type="match status" value="2"/>
</dbReference>
<name>CSTN3_MOUSE</name>
<protein>
    <recommendedName>
        <fullName evidence="18">Calsyntenin-3</fullName>
        <shortName evidence="20">Cst-3</shortName>
    </recommendedName>
    <alternativeName>
        <fullName evidence="19">Alcadein-beta</fullName>
    </alternativeName>
</protein>
<reference key="1">
    <citation type="journal article" date="2002" name="Mol. Cell. Neurosci.">
        <title>The calsyntenins - a family of postsynaptic membrane proteins with distinct neuronal expression patterns.</title>
        <authorList>
            <person name="Hintsch G."/>
            <person name="Zurlinden A."/>
            <person name="Meskenaite V."/>
            <person name="Steuble M."/>
            <person name="Fink-Widmer K."/>
            <person name="Kinter J."/>
            <person name="Sonderegger P."/>
        </authorList>
    </citation>
    <scope>NUCLEOTIDE SEQUENCE [MRNA]</scope>
    <scope>SUBCELLULAR LOCATION</scope>
    <scope>TISSUE SPECIFICITY</scope>
    <source>
        <tissue>Brain</tissue>
    </source>
</reference>
<reference key="2">
    <citation type="journal article" date="2019" name="Nature">
        <title>Innervation of thermogenic adipose tissue via a calsyntenin 3beta-S100b axis.</title>
        <authorList>
            <person name="Zeng X."/>
            <person name="Ye M."/>
            <person name="Resch J.M."/>
            <person name="Jedrychowski M.P."/>
            <person name="Hu B."/>
            <person name="Lowell B.B."/>
            <person name="Ginty D.D."/>
            <person name="Spiegelman B.M."/>
        </authorList>
    </citation>
    <scope>NUCLEOTIDE SEQUENCE [MRNA] (ISOFORM CLSTN3BETA)</scope>
    <scope>FUNCTION (ISOFORM CLSTN3BETA)</scope>
    <scope>SUBCELLULAR LOCATION (ISOFORM CLSTN3BETA)</scope>
    <scope>TISSUE SPECIFICITY (ISOFORM CLSTN3BETA)</scope>
    <scope>INDUCTION (ISOFORM CLSTN3BETA)</scope>
    <scope>DISRUPTION PHENOTYPE (ISOFORM CLSTN3BETA)</scope>
</reference>
<reference key="3">
    <citation type="journal article" date="2005" name="Science">
        <title>The transcriptional landscape of the mammalian genome.</title>
        <authorList>
            <person name="Carninci P."/>
            <person name="Kasukawa T."/>
            <person name="Katayama S."/>
            <person name="Gough J."/>
            <person name="Frith M.C."/>
            <person name="Maeda N."/>
            <person name="Oyama R."/>
            <person name="Ravasi T."/>
            <person name="Lenhard B."/>
            <person name="Wells C."/>
            <person name="Kodzius R."/>
            <person name="Shimokawa K."/>
            <person name="Bajic V.B."/>
            <person name="Brenner S.E."/>
            <person name="Batalov S."/>
            <person name="Forrest A.R."/>
            <person name="Zavolan M."/>
            <person name="Davis M.J."/>
            <person name="Wilming L.G."/>
            <person name="Aidinis V."/>
            <person name="Allen J.E."/>
            <person name="Ambesi-Impiombato A."/>
            <person name="Apweiler R."/>
            <person name="Aturaliya R.N."/>
            <person name="Bailey T.L."/>
            <person name="Bansal M."/>
            <person name="Baxter L."/>
            <person name="Beisel K.W."/>
            <person name="Bersano T."/>
            <person name="Bono H."/>
            <person name="Chalk A.M."/>
            <person name="Chiu K.P."/>
            <person name="Choudhary V."/>
            <person name="Christoffels A."/>
            <person name="Clutterbuck D.R."/>
            <person name="Crowe M.L."/>
            <person name="Dalla E."/>
            <person name="Dalrymple B.P."/>
            <person name="de Bono B."/>
            <person name="Della Gatta G."/>
            <person name="di Bernardo D."/>
            <person name="Down T."/>
            <person name="Engstrom P."/>
            <person name="Fagiolini M."/>
            <person name="Faulkner G."/>
            <person name="Fletcher C.F."/>
            <person name="Fukushima T."/>
            <person name="Furuno M."/>
            <person name="Futaki S."/>
            <person name="Gariboldi M."/>
            <person name="Georgii-Hemming P."/>
            <person name="Gingeras T.R."/>
            <person name="Gojobori T."/>
            <person name="Green R.E."/>
            <person name="Gustincich S."/>
            <person name="Harbers M."/>
            <person name="Hayashi Y."/>
            <person name="Hensch T.K."/>
            <person name="Hirokawa N."/>
            <person name="Hill D."/>
            <person name="Huminiecki L."/>
            <person name="Iacono M."/>
            <person name="Ikeo K."/>
            <person name="Iwama A."/>
            <person name="Ishikawa T."/>
            <person name="Jakt M."/>
            <person name="Kanapin A."/>
            <person name="Katoh M."/>
            <person name="Kawasawa Y."/>
            <person name="Kelso J."/>
            <person name="Kitamura H."/>
            <person name="Kitano H."/>
            <person name="Kollias G."/>
            <person name="Krishnan S.P."/>
            <person name="Kruger A."/>
            <person name="Kummerfeld S.K."/>
            <person name="Kurochkin I.V."/>
            <person name="Lareau L.F."/>
            <person name="Lazarevic D."/>
            <person name="Lipovich L."/>
            <person name="Liu J."/>
            <person name="Liuni S."/>
            <person name="McWilliam S."/>
            <person name="Madan Babu M."/>
            <person name="Madera M."/>
            <person name="Marchionni L."/>
            <person name="Matsuda H."/>
            <person name="Matsuzawa S."/>
            <person name="Miki H."/>
            <person name="Mignone F."/>
            <person name="Miyake S."/>
            <person name="Morris K."/>
            <person name="Mottagui-Tabar S."/>
            <person name="Mulder N."/>
            <person name="Nakano N."/>
            <person name="Nakauchi H."/>
            <person name="Ng P."/>
            <person name="Nilsson R."/>
            <person name="Nishiguchi S."/>
            <person name="Nishikawa S."/>
            <person name="Nori F."/>
            <person name="Ohara O."/>
            <person name="Okazaki Y."/>
            <person name="Orlando V."/>
            <person name="Pang K.C."/>
            <person name="Pavan W.J."/>
            <person name="Pavesi G."/>
            <person name="Pesole G."/>
            <person name="Petrovsky N."/>
            <person name="Piazza S."/>
            <person name="Reed J."/>
            <person name="Reid J.F."/>
            <person name="Ring B.Z."/>
            <person name="Ringwald M."/>
            <person name="Rost B."/>
            <person name="Ruan Y."/>
            <person name="Salzberg S.L."/>
            <person name="Sandelin A."/>
            <person name="Schneider C."/>
            <person name="Schoenbach C."/>
            <person name="Sekiguchi K."/>
            <person name="Semple C.A."/>
            <person name="Seno S."/>
            <person name="Sessa L."/>
            <person name="Sheng Y."/>
            <person name="Shibata Y."/>
            <person name="Shimada H."/>
            <person name="Shimada K."/>
            <person name="Silva D."/>
            <person name="Sinclair B."/>
            <person name="Sperling S."/>
            <person name="Stupka E."/>
            <person name="Sugiura K."/>
            <person name="Sultana R."/>
            <person name="Takenaka Y."/>
            <person name="Taki K."/>
            <person name="Tammoja K."/>
            <person name="Tan S.L."/>
            <person name="Tang S."/>
            <person name="Taylor M.S."/>
            <person name="Tegner J."/>
            <person name="Teichmann S.A."/>
            <person name="Ueda H.R."/>
            <person name="van Nimwegen E."/>
            <person name="Verardo R."/>
            <person name="Wei C.L."/>
            <person name="Yagi K."/>
            <person name="Yamanishi H."/>
            <person name="Zabarovsky E."/>
            <person name="Zhu S."/>
            <person name="Zimmer A."/>
            <person name="Hide W."/>
            <person name="Bult C."/>
            <person name="Grimmond S.M."/>
            <person name="Teasdale R.D."/>
            <person name="Liu E.T."/>
            <person name="Brusic V."/>
            <person name="Quackenbush J."/>
            <person name="Wahlestedt C."/>
            <person name="Mattick J.S."/>
            <person name="Hume D.A."/>
            <person name="Kai C."/>
            <person name="Sasaki D."/>
            <person name="Tomaru Y."/>
            <person name="Fukuda S."/>
            <person name="Kanamori-Katayama M."/>
            <person name="Suzuki M."/>
            <person name="Aoki J."/>
            <person name="Arakawa T."/>
            <person name="Iida J."/>
            <person name="Imamura K."/>
            <person name="Itoh M."/>
            <person name="Kato T."/>
            <person name="Kawaji H."/>
            <person name="Kawagashira N."/>
            <person name="Kawashima T."/>
            <person name="Kojima M."/>
            <person name="Kondo S."/>
            <person name="Konno H."/>
            <person name="Nakano K."/>
            <person name="Ninomiya N."/>
            <person name="Nishio T."/>
            <person name="Okada M."/>
            <person name="Plessy C."/>
            <person name="Shibata K."/>
            <person name="Shiraki T."/>
            <person name="Suzuki S."/>
            <person name="Tagami M."/>
            <person name="Waki K."/>
            <person name="Watahiki A."/>
            <person name="Okamura-Oho Y."/>
            <person name="Suzuki H."/>
            <person name="Kawai J."/>
            <person name="Hayashizaki Y."/>
        </authorList>
    </citation>
    <scope>NUCLEOTIDE SEQUENCE [LARGE SCALE MRNA]</scope>
    <source>
        <strain>C57BL/6J</strain>
        <tissue>Olfactory bulb</tissue>
    </source>
</reference>
<reference key="4">
    <citation type="journal article" date="2009" name="PLoS Biol.">
        <title>Lineage-specific biology revealed by a finished genome assembly of the mouse.</title>
        <authorList>
            <person name="Church D.M."/>
            <person name="Goodstadt L."/>
            <person name="Hillier L.W."/>
            <person name="Zody M.C."/>
            <person name="Goldstein S."/>
            <person name="She X."/>
            <person name="Bult C.J."/>
            <person name="Agarwala R."/>
            <person name="Cherry J.L."/>
            <person name="DiCuccio M."/>
            <person name="Hlavina W."/>
            <person name="Kapustin Y."/>
            <person name="Meric P."/>
            <person name="Maglott D."/>
            <person name="Birtle Z."/>
            <person name="Marques A.C."/>
            <person name="Graves T."/>
            <person name="Zhou S."/>
            <person name="Teague B."/>
            <person name="Potamousis K."/>
            <person name="Churas C."/>
            <person name="Place M."/>
            <person name="Herschleb J."/>
            <person name="Runnheim R."/>
            <person name="Forrest D."/>
            <person name="Amos-Landgraf J."/>
            <person name="Schwartz D.C."/>
            <person name="Cheng Z."/>
            <person name="Lindblad-Toh K."/>
            <person name="Eichler E.E."/>
            <person name="Ponting C.P."/>
        </authorList>
    </citation>
    <scope>NUCLEOTIDE SEQUENCE [LARGE SCALE GENOMIC DNA]</scope>
    <source>
        <strain>C57BL/6J</strain>
    </source>
</reference>
<reference key="5">
    <citation type="journal article" date="2004" name="Genome Res.">
        <title>The status, quality, and expansion of the NIH full-length cDNA project: the Mammalian Gene Collection (MGC).</title>
        <authorList>
            <consortium name="The MGC Project Team"/>
        </authorList>
    </citation>
    <scope>NUCLEOTIDE SEQUENCE [LARGE SCALE MRNA]</scope>
    <source>
        <tissue>Retina</tissue>
    </source>
</reference>
<reference key="6">
    <citation type="journal article" date="2006" name="Mol. Biol. Cell">
        <title>Calsyntenin-1 docks vesicular cargo to kinesin-1.</title>
        <authorList>
            <person name="Konecna A."/>
            <person name="Frischknecht R."/>
            <person name="Kinter J."/>
            <person name="Ludwig A."/>
            <person name="Steuble M."/>
            <person name="Meskenaite V."/>
            <person name="Indermuehle M."/>
            <person name="Engel M."/>
            <person name="Cen C."/>
            <person name="Mateos J.-M."/>
            <person name="Streit P."/>
            <person name="Sonderegger P."/>
        </authorList>
    </citation>
    <scope>INTERACTION WITH KLC1</scope>
    <scope>MUTAGENESIS OF PHE-896</scope>
</reference>
<reference key="7">
    <citation type="journal article" date="2010" name="Cell">
        <title>A tissue-specific atlas of mouse protein phosphorylation and expression.</title>
        <authorList>
            <person name="Huttlin E.L."/>
            <person name="Jedrychowski M.P."/>
            <person name="Elias J.E."/>
            <person name="Goswami T."/>
            <person name="Rad R."/>
            <person name="Beausoleil S.A."/>
            <person name="Villen J."/>
            <person name="Haas W."/>
            <person name="Sowa M.E."/>
            <person name="Gygi S.P."/>
        </authorList>
    </citation>
    <scope>IDENTIFICATION BY MASS SPECTROMETRY [LARGE SCALE ANALYSIS]</scope>
    <source>
        <tissue>Brain</tissue>
    </source>
</reference>
<reference key="8">
    <citation type="journal article" date="2013" name="Neuron">
        <title>The specific alpha-neurexin interactor calsyntenin-3 promotes excitatory and inhibitory synapse development.</title>
        <authorList>
            <person name="Pettem K.L."/>
            <person name="Yokomaku D."/>
            <person name="Luo L."/>
            <person name="Linhoff M.W."/>
            <person name="Prasad T."/>
            <person name="Connor S.A."/>
            <person name="Siddiqui T.J."/>
            <person name="Kawabe H."/>
            <person name="Chen F."/>
            <person name="Zhang L."/>
            <person name="Rudenko G."/>
            <person name="Wang Y.T."/>
            <person name="Brose N."/>
            <person name="Craig A.M."/>
        </authorList>
    </citation>
    <scope>FUNCTION</scope>
    <scope>INTERACTION WITH NEUREXINS</scope>
    <scope>TISSUE SPECIFICITY</scope>
    <scope>DISRUPTION PHENOTYPE</scope>
</reference>
<reference key="9">
    <citation type="journal article" date="2014" name="Cell Rep.">
        <title>Calsyntenins function as synaptogenic adhesion molecules in concert with neurexins.</title>
        <authorList>
            <person name="Um J.W."/>
            <person name="Pramanik G."/>
            <person name="Ko J.S."/>
            <person name="Song M.Y."/>
            <person name="Lee D."/>
            <person name="Kim H."/>
            <person name="Park K.S."/>
            <person name="Suedhof T.C."/>
            <person name="Tabuchi K."/>
            <person name="Ko J."/>
        </authorList>
    </citation>
    <scope>FUNCTION</scope>
    <scope>SUBCELLULAR LOCATION</scope>
    <scope>INTERACTION WITH NEUREXINS</scope>
</reference>
<reference key="10">
    <citation type="journal article" date="2020" name="Front. Endocrinol.">
        <title>Calsyntenin 3beta is dynamically regulated by temperature in murine brown adipose and marks human multilocular fat.</title>
        <authorList>
            <person name="Plucinska K."/>
            <person name="Jespersen N.Z."/>
            <person name="Brown E.L."/>
            <person name="Petersen P.S."/>
            <person name="Rupar K."/>
            <person name="Nielsen S."/>
            <person name="Scheele C."/>
            <person name="Emanuelli B."/>
        </authorList>
    </citation>
    <scope>TISSUE SPECIFICITY (ISOFORM CLSTN3BETA)</scope>
    <scope>INDUCTION (ISOFORM CLSTN3BETA)</scope>
</reference>
<reference key="11">
    <citation type="journal article" date="2020" name="Exp. Mol. Med.">
        <title>Neural regulation of energy and bone homeostasis by the synaptic adhesion molecule Calsyntenin-3.</title>
        <authorList>
            <person name="Kim S.J."/>
            <person name="Jeong Y.T."/>
            <person name="Jeong S.R."/>
            <person name="Park M."/>
            <person name="Go H.S."/>
            <person name="Kim M.Y."/>
            <person name="Seong J.K."/>
            <person name="Kim K.W."/>
            <person name="Seo J.T."/>
            <person name="Kim C.H."/>
            <person name="Lee J.H."/>
            <person name="Moon S.J."/>
        </authorList>
    </citation>
    <scope>DISRUPTION PHENOTYPE</scope>
</reference>
<reference key="12">
    <citation type="journal article" date="2020" name="J. Biol. Chem.">
        <title>Calsyntenin-3 interacts with both alpha- and beta-neurexins in the regulation of excitatory synaptic innervation in specific Schaffer collateral pathways.</title>
        <authorList>
            <person name="Kim H."/>
            <person name="Kim D."/>
            <person name="Kim J."/>
            <person name="Lee H.Y."/>
            <person name="Park D."/>
            <person name="Kang H."/>
            <person name="Matsuda K."/>
            <person name="Sterky F.H."/>
            <person name="Yuzaki M."/>
            <person name="Kim J.Y."/>
            <person name="Choi S.Y."/>
            <person name="Ko J."/>
            <person name="Um J.W."/>
        </authorList>
    </citation>
    <scope>FUNCTION</scope>
    <scope>INTERACTION WITH NEUREXINS</scope>
    <scope>DISRUPTION PHENOTYPE</scope>
</reference>
<reference key="13">
    <citation type="journal article" date="2021" name="Nutrients">
        <title>Upregulation of vitamin C transporter functional expression in 5xFAD mouse intestine.</title>
        <authorList>
            <person name="Teafatiller T."/>
            <person name="Heskett C.W."/>
            <person name="Agrawal A."/>
            <person name="Marchant J.S."/>
            <person name="Baulch J.E."/>
            <person name="Acharya M.M."/>
            <person name="Subramanian V.S."/>
        </authorList>
    </citation>
    <scope>FUNCTION</scope>
</reference>
<reference key="14">
    <citation type="journal article" date="2022" name="Elife">
        <title>Deletion of Calsyntenin-3, an atypical cadherin, suppresses inhibitory synapses but increases excitatory parallel-fiber synapses in cerebellum.</title>
        <authorList>
            <person name="Liu Z."/>
            <person name="Jiang M."/>
            <person name="Liakath-Ali K."/>
            <person name="Sclip A."/>
            <person name="Ko J."/>
            <person name="Zhang R.S."/>
            <person name="Suedhof T.C."/>
        </authorList>
    </citation>
    <scope>FUNCTION</scope>
    <scope>DISRUPTION PHENOTYPE</scope>
</reference>
<reference key="15">
    <citation type="journal article" date="2022" name="Mol. Brain">
        <title>Loss of calsyntenin paralogs disrupts interneuron stability and mouse behavior.</title>
        <authorList>
            <person name="Mori K."/>
            <person name="Koebis M."/>
            <person name="Nakao K."/>
            <person name="Kobayashi S."/>
            <person name="Kiyama Y."/>
            <person name="Watanabe M."/>
            <person name="Manabe T."/>
            <person name="Iino Y."/>
            <person name="Aiba A."/>
        </authorList>
    </citation>
    <scope>DISRUPTION PHENOTYPE</scope>
</reference>
<reference key="16">
    <citation type="journal article" date="2022" name="Nature">
        <title>CLSTN3beta enforces adipocyte multilocularity to facilitate lipid utilization.</title>
        <authorList>
            <person name="Qian K."/>
            <person name="Tol M.J."/>
            <person name="Wu J."/>
            <person name="Uchiyama L.F."/>
            <person name="Xiao X."/>
            <person name="Cui L."/>
            <person name="Bedard A.H."/>
            <person name="Weston T.A."/>
            <person name="Rajendran P.S."/>
            <person name="Vergnes L."/>
            <person name="Shimanaka Y."/>
            <person name="Yin Y."/>
            <person name="Jami-Alahmadi Y."/>
            <person name="Cohn W."/>
            <person name="Bajar B.T."/>
            <person name="Lin C.H."/>
            <person name="Jin B."/>
            <person name="DeNardo L.A."/>
            <person name="Black D.L."/>
            <person name="Whitelegge J.P."/>
            <person name="Wohlschlegel J.A."/>
            <person name="Reue K."/>
            <person name="Shivkumar K."/>
            <person name="Chen F.J."/>
            <person name="Young S.G."/>
            <person name="Li P."/>
            <person name="Tontonoz P."/>
        </authorList>
    </citation>
    <scope>FUNCTION (ISOFORM CLSTN3BETA)</scope>
    <scope>SUBCELLULAR LOCATION (ISOFORM CLSTN3BETA)</scope>
    <scope>TOPOLOGY (ISOFORM CLSTN3BETA)</scope>
    <scope>TISSUE SPECIFICITY (ISOFORM CLSTN3BETA)</scope>
    <scope>INDUCTION (ISOFORM CLSTN3BETA)</scope>
    <scope>UBIQUITINATION (ISOFORM CLSTN3BETA)</scope>
    <scope>INTERACTION WITH CEDEA AND CIDEC (ISOFORM CLSTN3BETA)</scope>
    <scope>DISRUPTION PHENOTYPE (ISOFORM CLSTN3BETA)</scope>
</reference>
<sequence>MTLLLVSLLLASLLQISSGNKANKHKPWIEAEYQGIVMENDNTVLLNPPLFALDKDAPLRYAGEICGFRLHGSGVPFEAVILDKATGEGLIRAKEPVDCEAQKEHTFTIQAYDCGEGPDGTNTKKSHKATVHVRVNDVNEFAPVFVERLYRAAVTEGKLYDRILRVEAIDGDCSPQYSQICYYEILTPNTPFLIDNDGNIENTEKLQYSGEKLYKFTVTAYDCGKKRAADDAEVEIQVKPTCKPSWQGWNKRIEYAPGAGSLALFPGIRLETCDEPLWNIQATIELQTSHVAKGCDRDNYSERALRKLCGAATGEVDLLPMPGPNANWTAGLSVHYSQDSSLIYWFNGTQAVQVPLGGPAGLGSGPQDGFSDHFTLSFWMKHSVTPSKGKKEEETIVCNTVQNEDGYSHYSLTVHGCRIAFLYWPLLESARPVKFLWKLEQVCDDEWHHYALNLEFPTVTLYTDGISFDPALIHDNGLIHPPRREPALMIGACWTEEKNKEKKGGENSTDTASGDPLLIHHYFHGYLAGFSVRSGRLESREVIECLYACREGLDYRDFESLGKGMKVHVNPSQSLLTLEGDDVETFNHALQHVAYMNTLRFATPGVRPLRLTTAVKCFSEESCVSIPEVEGYVVVLQPDAPQILLSGTAHFARPAVDFEGPEGVPLFPDLQITCSISHQVEAKADESWQGTVTDTRMSDEIVHNLDGCEISLVGDDLDPERESLLLDMASLQQRGLELTNTSAYLTIAGVETITVYEEILRQARYQLRHGAALYARKFRLSCSEMNGRYSSNEFIVEVNVLHSMNRVAHPSHVLSSQQFLHRGHQPPPEMAGHSLASSHRNSMVPSAATLIIVVCVGFLVLMVILGLVRIHSLHRRVSGTGGPSGASTDPKDPDLFWDDSALTIIVNPMESYQNQQTCVAGVAGGQQEEEDSSDSEAADSPSSDERRIIESPPHRY</sequence>
<gene>
    <name evidence="21 24" type="primary">Clstn3</name>
    <name evidence="18" type="synonym">Cs3</name>
    <name type="synonym">Cstn3</name>
</gene>
<keyword id="KW-0025">Alternative splicing</keyword>
<keyword id="KW-0106">Calcium</keyword>
<keyword id="KW-0130">Cell adhesion</keyword>
<keyword id="KW-1003">Cell membrane</keyword>
<keyword id="KW-0966">Cell projection</keyword>
<keyword id="KW-0256">Endoplasmic reticulum</keyword>
<keyword id="KW-0325">Glycoprotein</keyword>
<keyword id="KW-0333">Golgi apparatus</keyword>
<keyword id="KW-0551">Lipid droplet</keyword>
<keyword id="KW-0472">Membrane</keyword>
<keyword id="KW-0628">Postsynaptic cell membrane</keyword>
<keyword id="KW-1185">Reference proteome</keyword>
<keyword id="KW-0677">Repeat</keyword>
<keyword id="KW-0732">Signal</keyword>
<keyword id="KW-0770">Synapse</keyword>
<keyword id="KW-0812">Transmembrane</keyword>
<keyword id="KW-1133">Transmembrane helix</keyword>
<keyword id="KW-0832">Ubl conjugation</keyword>
<accession>Q99JH7</accession>
<accession>A0A4P8DYG6</accession>
<accession>Q544R0</accession>